<organism>
    <name type="scientific">Mannheimia succiniciproducens (strain KCTC 0769BP / MBEL55E)</name>
    <dbReference type="NCBI Taxonomy" id="221988"/>
    <lineage>
        <taxon>Bacteria</taxon>
        <taxon>Pseudomonadati</taxon>
        <taxon>Pseudomonadota</taxon>
        <taxon>Gammaproteobacteria</taxon>
        <taxon>Pasteurellales</taxon>
        <taxon>Pasteurellaceae</taxon>
        <taxon>Basfia</taxon>
    </lineage>
</organism>
<reference key="1">
    <citation type="journal article" date="2004" name="Nat. Biotechnol.">
        <title>The genome sequence of the capnophilic rumen bacterium Mannheimia succiniciproducens.</title>
        <authorList>
            <person name="Hong S.H."/>
            <person name="Kim J.S."/>
            <person name="Lee S.Y."/>
            <person name="In Y.H."/>
            <person name="Choi S.S."/>
            <person name="Rih J.-K."/>
            <person name="Kim C.H."/>
            <person name="Jeong H."/>
            <person name="Hur C.G."/>
            <person name="Kim J.J."/>
        </authorList>
    </citation>
    <scope>NUCLEOTIDE SEQUENCE [LARGE SCALE GENOMIC DNA]</scope>
    <source>
        <strain>KCTC 0769BP / MBEL55E</strain>
    </source>
</reference>
<evidence type="ECO:0000255" key="1">
    <source>
        <dbReference type="HAMAP-Rule" id="MF_00323"/>
    </source>
</evidence>
<sequence>MKSSKTGILLANLGTPDTPSPKAISRYLKEFLSDPRVVDLPRWKWLPLLNGIILPIRSRRIAKNYGAIWTEQGSPLFAITQKQKALLTEFFQQRQQNVIIEIGMTYGNPSMQYAIDNLIEQKVDKIIVLPLYPQYSSTTTAPVFDVFAQALKRHRHIVPFEFIHSYHLDENYIEALVKSIKVRLKNDEFLLFSFHGIPKRYEQEGDFYRPQCEQTAQAVVQKLGLKKEQWRLCFQSRFGSEPWLQPYTDKFLETAAQQGITKLAVICPGFSADCLETLEEIKEENKRIFLAYGGESYHYIPALNDSPEHIACLGNLLLKRMTI</sequence>
<accession>Q65SV7</accession>
<protein>
    <recommendedName>
        <fullName evidence="1">Ferrochelatase</fullName>
        <ecNumber evidence="1">4.98.1.1</ecNumber>
    </recommendedName>
    <alternativeName>
        <fullName evidence="1">Heme synthase</fullName>
    </alternativeName>
    <alternativeName>
        <fullName evidence="1">Protoheme ferro-lyase</fullName>
    </alternativeName>
</protein>
<keyword id="KW-0963">Cytoplasm</keyword>
<keyword id="KW-0350">Heme biosynthesis</keyword>
<keyword id="KW-0408">Iron</keyword>
<keyword id="KW-0456">Lyase</keyword>
<keyword id="KW-0479">Metal-binding</keyword>
<keyword id="KW-0627">Porphyrin biosynthesis</keyword>
<proteinExistence type="inferred from homology"/>
<comment type="function">
    <text evidence="1">Catalyzes the ferrous insertion into protoporphyrin IX.</text>
</comment>
<comment type="catalytic activity">
    <reaction evidence="1">
        <text>heme b + 2 H(+) = protoporphyrin IX + Fe(2+)</text>
        <dbReference type="Rhea" id="RHEA:22584"/>
        <dbReference type="ChEBI" id="CHEBI:15378"/>
        <dbReference type="ChEBI" id="CHEBI:29033"/>
        <dbReference type="ChEBI" id="CHEBI:57306"/>
        <dbReference type="ChEBI" id="CHEBI:60344"/>
        <dbReference type="EC" id="4.98.1.1"/>
    </reaction>
</comment>
<comment type="pathway">
    <text evidence="1">Porphyrin-containing compound metabolism; protoheme biosynthesis; protoheme from protoporphyrin-IX: step 1/1.</text>
</comment>
<comment type="subcellular location">
    <subcellularLocation>
        <location evidence="1">Cytoplasm</location>
    </subcellularLocation>
</comment>
<comment type="similarity">
    <text evidence="1">Belongs to the ferrochelatase family.</text>
</comment>
<gene>
    <name evidence="1" type="primary">hemH</name>
    <name type="ordered locus">MS1346</name>
</gene>
<dbReference type="EC" id="4.98.1.1" evidence="1"/>
<dbReference type="EMBL" id="AE016827">
    <property type="protein sequence ID" value="AAU37953.1"/>
    <property type="molecule type" value="Genomic_DNA"/>
</dbReference>
<dbReference type="RefSeq" id="WP_011200520.1">
    <property type="nucleotide sequence ID" value="NC_006300.1"/>
</dbReference>
<dbReference type="SMR" id="Q65SV7"/>
<dbReference type="STRING" id="221988.MS1346"/>
<dbReference type="KEGG" id="msu:MS1346"/>
<dbReference type="eggNOG" id="COG0276">
    <property type="taxonomic scope" value="Bacteria"/>
</dbReference>
<dbReference type="HOGENOM" id="CLU_018884_0_0_6"/>
<dbReference type="OrthoDB" id="9809741at2"/>
<dbReference type="UniPathway" id="UPA00252">
    <property type="reaction ID" value="UER00325"/>
</dbReference>
<dbReference type="Proteomes" id="UP000000607">
    <property type="component" value="Chromosome"/>
</dbReference>
<dbReference type="GO" id="GO:0005737">
    <property type="term" value="C:cytoplasm"/>
    <property type="evidence" value="ECO:0007669"/>
    <property type="project" value="UniProtKB-SubCell"/>
</dbReference>
<dbReference type="GO" id="GO:0004325">
    <property type="term" value="F:ferrochelatase activity"/>
    <property type="evidence" value="ECO:0007669"/>
    <property type="project" value="UniProtKB-UniRule"/>
</dbReference>
<dbReference type="GO" id="GO:0046872">
    <property type="term" value="F:metal ion binding"/>
    <property type="evidence" value="ECO:0007669"/>
    <property type="project" value="UniProtKB-KW"/>
</dbReference>
<dbReference type="GO" id="GO:0006783">
    <property type="term" value="P:heme biosynthetic process"/>
    <property type="evidence" value="ECO:0007669"/>
    <property type="project" value="UniProtKB-UniRule"/>
</dbReference>
<dbReference type="CDD" id="cd00419">
    <property type="entry name" value="Ferrochelatase_C"/>
    <property type="match status" value="1"/>
</dbReference>
<dbReference type="CDD" id="cd03411">
    <property type="entry name" value="Ferrochelatase_N"/>
    <property type="match status" value="1"/>
</dbReference>
<dbReference type="FunFam" id="3.40.50.1400:FF:000002">
    <property type="entry name" value="Ferrochelatase"/>
    <property type="match status" value="1"/>
</dbReference>
<dbReference type="Gene3D" id="3.40.50.1400">
    <property type="match status" value="2"/>
</dbReference>
<dbReference type="HAMAP" id="MF_00323">
    <property type="entry name" value="Ferrochelatase"/>
    <property type="match status" value="1"/>
</dbReference>
<dbReference type="InterPro" id="IPR001015">
    <property type="entry name" value="Ferrochelatase"/>
</dbReference>
<dbReference type="InterPro" id="IPR019772">
    <property type="entry name" value="Ferrochelatase_AS"/>
</dbReference>
<dbReference type="InterPro" id="IPR033644">
    <property type="entry name" value="Ferrochelatase_C"/>
</dbReference>
<dbReference type="InterPro" id="IPR033659">
    <property type="entry name" value="Ferrochelatase_N"/>
</dbReference>
<dbReference type="NCBIfam" id="TIGR00109">
    <property type="entry name" value="hemH"/>
    <property type="match status" value="1"/>
</dbReference>
<dbReference type="PANTHER" id="PTHR11108">
    <property type="entry name" value="FERROCHELATASE"/>
    <property type="match status" value="1"/>
</dbReference>
<dbReference type="PANTHER" id="PTHR11108:SF1">
    <property type="entry name" value="FERROCHELATASE, MITOCHONDRIAL"/>
    <property type="match status" value="1"/>
</dbReference>
<dbReference type="Pfam" id="PF00762">
    <property type="entry name" value="Ferrochelatase"/>
    <property type="match status" value="1"/>
</dbReference>
<dbReference type="SUPFAM" id="SSF53800">
    <property type="entry name" value="Chelatase"/>
    <property type="match status" value="1"/>
</dbReference>
<dbReference type="PROSITE" id="PS00534">
    <property type="entry name" value="FERROCHELATASE"/>
    <property type="match status" value="1"/>
</dbReference>
<name>HEMH_MANSM</name>
<feature type="chain" id="PRO_0000175162" description="Ferrochelatase">
    <location>
        <begin position="1"/>
        <end position="323"/>
    </location>
</feature>
<feature type="binding site" evidence="1">
    <location>
        <position position="195"/>
    </location>
    <ligand>
        <name>Fe cation</name>
        <dbReference type="ChEBI" id="CHEBI:24875"/>
    </ligand>
</feature>
<feature type="binding site" evidence="1">
    <location>
        <position position="276"/>
    </location>
    <ligand>
        <name>Fe cation</name>
        <dbReference type="ChEBI" id="CHEBI:24875"/>
    </ligand>
</feature>